<keyword id="KW-0249">Electron transport</keyword>
<keyword id="KW-0349">Heme</keyword>
<keyword id="KW-0408">Iron</keyword>
<keyword id="KW-0472">Membrane</keyword>
<keyword id="KW-0479">Metal-binding</keyword>
<keyword id="KW-0496">Mitochondrion</keyword>
<keyword id="KW-0999">Mitochondrion inner membrane</keyword>
<keyword id="KW-0679">Respiratory chain</keyword>
<keyword id="KW-0812">Transmembrane</keyword>
<keyword id="KW-1133">Transmembrane helix</keyword>
<keyword id="KW-0813">Transport</keyword>
<keyword id="KW-0830">Ubiquinone</keyword>
<protein>
    <recommendedName>
        <fullName>Cytochrome b</fullName>
    </recommendedName>
    <alternativeName>
        <fullName>Complex III subunit 3</fullName>
    </alternativeName>
    <alternativeName>
        <fullName>Complex III subunit III</fullName>
    </alternativeName>
    <alternativeName>
        <fullName>Cytochrome b-c1 complex subunit 3</fullName>
    </alternativeName>
    <alternativeName>
        <fullName>Ubiquinol-cytochrome-c reductase complex cytochrome b subunit</fullName>
    </alternativeName>
</protein>
<feature type="chain" id="PRO_0000061182" description="Cytochrome b">
    <location>
        <begin position="1"/>
        <end position="370"/>
    </location>
</feature>
<feature type="transmembrane region" description="Helical" evidence="2">
    <location>
        <begin position="25"/>
        <end position="45"/>
    </location>
</feature>
<feature type="transmembrane region" description="Helical" evidence="2">
    <location>
        <begin position="69"/>
        <end position="90"/>
    </location>
</feature>
<feature type="transmembrane region" description="Helical" evidence="2">
    <location>
        <begin position="105"/>
        <end position="125"/>
    </location>
</feature>
<feature type="transmembrane region" description="Helical" evidence="2">
    <location>
        <begin position="170"/>
        <end position="190"/>
    </location>
</feature>
<feature type="transmembrane region" description="Helical" evidence="2">
    <location>
        <begin position="218"/>
        <end position="238"/>
    </location>
</feature>
<feature type="transmembrane region" description="Helical" evidence="2">
    <location>
        <begin position="280"/>
        <end position="300"/>
    </location>
</feature>
<feature type="transmembrane region" description="Helical" evidence="2">
    <location>
        <begin position="312"/>
        <end position="332"/>
    </location>
</feature>
<feature type="transmembrane region" description="Helical" evidence="2">
    <location>
        <begin position="339"/>
        <end position="358"/>
    </location>
</feature>
<feature type="binding site" description="axial binding residue" evidence="2">
    <location>
        <position position="75"/>
    </location>
    <ligand>
        <name>heme b</name>
        <dbReference type="ChEBI" id="CHEBI:60344"/>
        <label>b562</label>
    </ligand>
    <ligandPart>
        <name>Fe</name>
        <dbReference type="ChEBI" id="CHEBI:18248"/>
    </ligandPart>
</feature>
<feature type="binding site" description="axial binding residue" evidence="2">
    <location>
        <position position="89"/>
    </location>
    <ligand>
        <name>heme b</name>
        <dbReference type="ChEBI" id="CHEBI:60344"/>
        <label>b566</label>
    </ligand>
    <ligandPart>
        <name>Fe</name>
        <dbReference type="ChEBI" id="CHEBI:18248"/>
    </ligandPart>
</feature>
<feature type="binding site" description="axial binding residue" evidence="2">
    <location>
        <position position="174"/>
    </location>
    <ligand>
        <name>heme b</name>
        <dbReference type="ChEBI" id="CHEBI:60344"/>
        <label>b562</label>
    </ligand>
    <ligandPart>
        <name>Fe</name>
        <dbReference type="ChEBI" id="CHEBI:18248"/>
    </ligandPart>
</feature>
<feature type="binding site" description="axial binding residue" evidence="2">
    <location>
        <position position="188"/>
    </location>
    <ligand>
        <name>heme b</name>
        <dbReference type="ChEBI" id="CHEBI:60344"/>
        <label>b566</label>
    </ligand>
    <ligandPart>
        <name>Fe</name>
        <dbReference type="ChEBI" id="CHEBI:18248"/>
    </ligandPart>
</feature>
<feature type="binding site" evidence="2">
    <location>
        <position position="193"/>
    </location>
    <ligand>
        <name>a ubiquinone</name>
        <dbReference type="ChEBI" id="CHEBI:16389"/>
    </ligand>
</feature>
<organism>
    <name type="scientific">Micropechis ikaheca</name>
    <name type="common">New Guinean small-eyed snake</name>
    <dbReference type="NCBI Taxonomy" id="66188"/>
    <lineage>
        <taxon>Eukaryota</taxon>
        <taxon>Metazoa</taxon>
        <taxon>Chordata</taxon>
        <taxon>Craniata</taxon>
        <taxon>Vertebrata</taxon>
        <taxon>Euteleostomi</taxon>
        <taxon>Lepidosauria</taxon>
        <taxon>Squamata</taxon>
        <taxon>Bifurcata</taxon>
        <taxon>Unidentata</taxon>
        <taxon>Episquamata</taxon>
        <taxon>Toxicofera</taxon>
        <taxon>Serpentes</taxon>
        <taxon>Colubroidea</taxon>
        <taxon>Elapidae</taxon>
        <taxon>Notechinae</taxon>
        <taxon>Micropechis</taxon>
    </lineage>
</organism>
<reference key="1">
    <citation type="journal article" date="2000" name="Mol. Phylogenet. Evol.">
        <title>Phylogenetic relationships of elapid snakes based on cytochrome b mtDNA sequences.</title>
        <authorList>
            <person name="Slowinski J.B."/>
            <person name="Keogh J.S."/>
        </authorList>
    </citation>
    <scope>NUCLEOTIDE SEQUENCE [GENOMIC DNA]</scope>
</reference>
<accession>Q9MLK2</accession>
<geneLocation type="mitochondrion"/>
<sequence>MSNQHTLLISNLLPVGSNISTWWNFGSMLLTCMALQTSTGFFLAIHYTANINLAFSSVTHILRDVPYGWIMQNLHAIGASLFFICIYTHIARGLYYGLYLNKWVWLSGTILLIILMATAFFGYVLPWGQMSFWAATVITNLLTAIPYLGPTLTTWLWGGFSINDPTLTRFFALHFILPFLIISLSSIHIVLLHNEGSNNPLGTNPDIDKIPFHPYHSYKDMLMATTMITMLFITMSFMPNLFNDPENFSKANPLVTPQHIKPEWYFLFAYGILRSIPNKLGGTLALLMSVIILTAPPFTHTSHVRPMTFRPLTQILFWMLIATFITITWTATKPVEPPFITISQMASTXYFLFFIINPILGWIENKIINK</sequence>
<gene>
    <name type="primary">MT-CYB</name>
    <name type="synonym">COB</name>
    <name type="synonym">CYTB</name>
    <name type="synonym">MTCYB</name>
</gene>
<evidence type="ECO:0000250" key="1"/>
<evidence type="ECO:0000250" key="2">
    <source>
        <dbReference type="UniProtKB" id="P00157"/>
    </source>
</evidence>
<evidence type="ECO:0000255" key="3">
    <source>
        <dbReference type="PROSITE-ProRule" id="PRU00967"/>
    </source>
</evidence>
<evidence type="ECO:0000255" key="4">
    <source>
        <dbReference type="PROSITE-ProRule" id="PRU00968"/>
    </source>
</evidence>
<dbReference type="EMBL" id="AF217826">
    <property type="protein sequence ID" value="AAF37245.1"/>
    <property type="molecule type" value="Genomic_DNA"/>
</dbReference>
<dbReference type="GO" id="GO:0005743">
    <property type="term" value="C:mitochondrial inner membrane"/>
    <property type="evidence" value="ECO:0007669"/>
    <property type="project" value="UniProtKB-SubCell"/>
</dbReference>
<dbReference type="GO" id="GO:0045275">
    <property type="term" value="C:respiratory chain complex III"/>
    <property type="evidence" value="ECO:0007669"/>
    <property type="project" value="InterPro"/>
</dbReference>
<dbReference type="GO" id="GO:0046872">
    <property type="term" value="F:metal ion binding"/>
    <property type="evidence" value="ECO:0007669"/>
    <property type="project" value="UniProtKB-KW"/>
</dbReference>
<dbReference type="GO" id="GO:0008121">
    <property type="term" value="F:ubiquinol-cytochrome-c reductase activity"/>
    <property type="evidence" value="ECO:0007669"/>
    <property type="project" value="InterPro"/>
</dbReference>
<dbReference type="GO" id="GO:0006122">
    <property type="term" value="P:mitochondrial electron transport, ubiquinol to cytochrome c"/>
    <property type="evidence" value="ECO:0007669"/>
    <property type="project" value="TreeGrafter"/>
</dbReference>
<dbReference type="CDD" id="cd00290">
    <property type="entry name" value="cytochrome_b_C"/>
    <property type="match status" value="1"/>
</dbReference>
<dbReference type="CDD" id="cd00284">
    <property type="entry name" value="Cytochrome_b_N"/>
    <property type="match status" value="1"/>
</dbReference>
<dbReference type="Gene3D" id="1.20.810.10">
    <property type="entry name" value="Cytochrome Bc1 Complex, Chain C"/>
    <property type="match status" value="1"/>
</dbReference>
<dbReference type="InterPro" id="IPR005798">
    <property type="entry name" value="Cyt_b/b6_C"/>
</dbReference>
<dbReference type="InterPro" id="IPR036150">
    <property type="entry name" value="Cyt_b/b6_C_sf"/>
</dbReference>
<dbReference type="InterPro" id="IPR005797">
    <property type="entry name" value="Cyt_b/b6_N"/>
</dbReference>
<dbReference type="InterPro" id="IPR027387">
    <property type="entry name" value="Cytb/b6-like_sf"/>
</dbReference>
<dbReference type="InterPro" id="IPR030689">
    <property type="entry name" value="Cytochrome_b"/>
</dbReference>
<dbReference type="InterPro" id="IPR048260">
    <property type="entry name" value="Cytochrome_b_C_euk/bac"/>
</dbReference>
<dbReference type="InterPro" id="IPR048259">
    <property type="entry name" value="Cytochrome_b_N_euk/bac"/>
</dbReference>
<dbReference type="InterPro" id="IPR016174">
    <property type="entry name" value="Di-haem_cyt_TM"/>
</dbReference>
<dbReference type="PANTHER" id="PTHR19271">
    <property type="entry name" value="CYTOCHROME B"/>
    <property type="match status" value="1"/>
</dbReference>
<dbReference type="PANTHER" id="PTHR19271:SF16">
    <property type="entry name" value="CYTOCHROME B"/>
    <property type="match status" value="1"/>
</dbReference>
<dbReference type="Pfam" id="PF00032">
    <property type="entry name" value="Cytochrom_B_C"/>
    <property type="match status" value="1"/>
</dbReference>
<dbReference type="Pfam" id="PF00033">
    <property type="entry name" value="Cytochrome_B"/>
    <property type="match status" value="1"/>
</dbReference>
<dbReference type="PIRSF" id="PIRSF038885">
    <property type="entry name" value="COB"/>
    <property type="match status" value="1"/>
</dbReference>
<dbReference type="SUPFAM" id="SSF81648">
    <property type="entry name" value="a domain/subunit of cytochrome bc1 complex (Ubiquinol-cytochrome c reductase)"/>
    <property type="match status" value="1"/>
</dbReference>
<dbReference type="SUPFAM" id="SSF81342">
    <property type="entry name" value="Transmembrane di-heme cytochromes"/>
    <property type="match status" value="1"/>
</dbReference>
<dbReference type="PROSITE" id="PS51003">
    <property type="entry name" value="CYTB_CTER"/>
    <property type="match status" value="1"/>
</dbReference>
<dbReference type="PROSITE" id="PS51002">
    <property type="entry name" value="CYTB_NTER"/>
    <property type="match status" value="1"/>
</dbReference>
<comment type="function">
    <text evidence="2">Component of the ubiquinol-cytochrome c reductase complex (complex III or cytochrome b-c1 complex) that is part of the mitochondrial respiratory chain. The b-c1 complex mediates electron transfer from ubiquinol to cytochrome c. Contributes to the generation of a proton gradient across the mitochondrial membrane that is then used for ATP synthesis.</text>
</comment>
<comment type="cofactor">
    <cofactor evidence="2">
        <name>heme b</name>
        <dbReference type="ChEBI" id="CHEBI:60344"/>
    </cofactor>
    <text evidence="2">Binds 2 heme b groups non-covalently.</text>
</comment>
<comment type="subunit">
    <text evidence="2">The cytochrome bc1 complex contains 3 respiratory subunits (MT-CYB, CYC1 and UQCRFS1), 2 core proteins (UQCRC1 and UQCRC2) and probably 6 low-molecular weight proteins.</text>
</comment>
<comment type="subcellular location">
    <subcellularLocation>
        <location evidence="2">Mitochondrion inner membrane</location>
        <topology evidence="2">Multi-pass membrane protein</topology>
    </subcellularLocation>
</comment>
<comment type="miscellaneous">
    <text evidence="1">Heme 1 (or BL or b562) is low-potential and absorbs at about 562 nm, and heme 2 (or BH or b566) is high-potential and absorbs at about 566 nm.</text>
</comment>
<comment type="similarity">
    <text evidence="3 4">Belongs to the cytochrome b family.</text>
</comment>
<comment type="caution">
    <text evidence="2">The full-length protein contains only eight transmembrane helices, not nine as predicted by bioinformatics tools.</text>
</comment>
<name>CYB_MICIK</name>
<proteinExistence type="inferred from homology"/>